<gene>
    <name evidence="1" type="primary">hypA</name>
    <name type="ordered locus">GSU0374</name>
</gene>
<keyword id="KW-0479">Metal-binding</keyword>
<keyword id="KW-0533">Nickel</keyword>
<keyword id="KW-1185">Reference proteome</keyword>
<keyword id="KW-0862">Zinc</keyword>
<organism>
    <name type="scientific">Geobacter sulfurreducens (strain ATCC 51573 / DSM 12127 / PCA)</name>
    <dbReference type="NCBI Taxonomy" id="243231"/>
    <lineage>
        <taxon>Bacteria</taxon>
        <taxon>Pseudomonadati</taxon>
        <taxon>Thermodesulfobacteriota</taxon>
        <taxon>Desulfuromonadia</taxon>
        <taxon>Geobacterales</taxon>
        <taxon>Geobacteraceae</taxon>
        <taxon>Geobacter</taxon>
    </lineage>
</organism>
<feature type="chain" id="PRO_0000129040" description="Hydrogenase maturation factor HypA">
    <location>
        <begin position="1"/>
        <end position="110"/>
    </location>
</feature>
<feature type="binding site" evidence="1">
    <location>
        <position position="2"/>
    </location>
    <ligand>
        <name>Ni(2+)</name>
        <dbReference type="ChEBI" id="CHEBI:49786"/>
    </ligand>
</feature>
<feature type="binding site" evidence="1">
    <location>
        <position position="70"/>
    </location>
    <ligand>
        <name>Zn(2+)</name>
        <dbReference type="ChEBI" id="CHEBI:29105"/>
    </ligand>
</feature>
<feature type="binding site" evidence="1">
    <location>
        <position position="73"/>
    </location>
    <ligand>
        <name>Zn(2+)</name>
        <dbReference type="ChEBI" id="CHEBI:29105"/>
    </ligand>
</feature>
<feature type="binding site" evidence="1">
    <location>
        <position position="86"/>
    </location>
    <ligand>
        <name>Zn(2+)</name>
        <dbReference type="ChEBI" id="CHEBI:29105"/>
    </ligand>
</feature>
<feature type="binding site" evidence="1">
    <location>
        <position position="89"/>
    </location>
    <ligand>
        <name>Zn(2+)</name>
        <dbReference type="ChEBI" id="CHEBI:29105"/>
    </ligand>
</feature>
<proteinExistence type="inferred from homology"/>
<name>HYPA_GEOSL</name>
<evidence type="ECO:0000255" key="1">
    <source>
        <dbReference type="HAMAP-Rule" id="MF_00213"/>
    </source>
</evidence>
<sequence length="110" mass="11791">MHEMSITQNVVEICEKSAEGRRILAVVLEIGELSGVVPEAVEFCFEACTAGTLAEGARLAIDRVPGRGECGNCATVFPVRTYFDPCPACGAYGVRVVAGEELRVKELEVE</sequence>
<comment type="function">
    <text evidence="1">Involved in the maturation of [NiFe] hydrogenases. Required for nickel insertion into the metal center of the hydrogenase.</text>
</comment>
<comment type="similarity">
    <text evidence="1">Belongs to the HypA/HybF family.</text>
</comment>
<dbReference type="EMBL" id="AE017180">
    <property type="protein sequence ID" value="AAR33706.1"/>
    <property type="molecule type" value="Genomic_DNA"/>
</dbReference>
<dbReference type="RefSeq" id="NP_951433.1">
    <property type="nucleotide sequence ID" value="NC_002939.5"/>
</dbReference>
<dbReference type="RefSeq" id="WP_010941042.1">
    <property type="nucleotide sequence ID" value="NC_002939.5"/>
</dbReference>
<dbReference type="SMR" id="Q74G73"/>
<dbReference type="FunCoup" id="Q74G73">
    <property type="interactions" value="56"/>
</dbReference>
<dbReference type="STRING" id="243231.GSU0374"/>
<dbReference type="EnsemblBacteria" id="AAR33706">
    <property type="protein sequence ID" value="AAR33706"/>
    <property type="gene ID" value="GSU0374"/>
</dbReference>
<dbReference type="KEGG" id="gsu:GSU0374"/>
<dbReference type="PATRIC" id="fig|243231.5.peg.372"/>
<dbReference type="eggNOG" id="COG0375">
    <property type="taxonomic scope" value="Bacteria"/>
</dbReference>
<dbReference type="HOGENOM" id="CLU_126929_3_0_7"/>
<dbReference type="InParanoid" id="Q74G73"/>
<dbReference type="OrthoDB" id="9800361at2"/>
<dbReference type="Proteomes" id="UP000000577">
    <property type="component" value="Chromosome"/>
</dbReference>
<dbReference type="GO" id="GO:0016151">
    <property type="term" value="F:nickel cation binding"/>
    <property type="evidence" value="ECO:0000318"/>
    <property type="project" value="GO_Central"/>
</dbReference>
<dbReference type="GO" id="GO:0008270">
    <property type="term" value="F:zinc ion binding"/>
    <property type="evidence" value="ECO:0000318"/>
    <property type="project" value="GO_Central"/>
</dbReference>
<dbReference type="GO" id="GO:0051604">
    <property type="term" value="P:protein maturation"/>
    <property type="evidence" value="ECO:0000318"/>
    <property type="project" value="GO_Central"/>
</dbReference>
<dbReference type="GO" id="GO:0036211">
    <property type="term" value="P:protein modification process"/>
    <property type="evidence" value="ECO:0007669"/>
    <property type="project" value="UniProtKB-UniRule"/>
</dbReference>
<dbReference type="FunFam" id="3.30.2320.80:FF:000001">
    <property type="entry name" value="Hydrogenase maturation factor HypA"/>
    <property type="match status" value="1"/>
</dbReference>
<dbReference type="Gene3D" id="3.30.2320.80">
    <property type="match status" value="1"/>
</dbReference>
<dbReference type="HAMAP" id="MF_00213">
    <property type="entry name" value="HypA_HybF"/>
    <property type="match status" value="1"/>
</dbReference>
<dbReference type="InterPro" id="IPR020538">
    <property type="entry name" value="Hydgase_Ni_incorp_HypA/HybF_CS"/>
</dbReference>
<dbReference type="InterPro" id="IPR000688">
    <property type="entry name" value="HypA/HybF"/>
</dbReference>
<dbReference type="NCBIfam" id="TIGR00100">
    <property type="entry name" value="hypA"/>
    <property type="match status" value="1"/>
</dbReference>
<dbReference type="PANTHER" id="PTHR34535">
    <property type="entry name" value="HYDROGENASE MATURATION FACTOR HYPA"/>
    <property type="match status" value="1"/>
</dbReference>
<dbReference type="PANTHER" id="PTHR34535:SF3">
    <property type="entry name" value="HYDROGENASE MATURATION FACTOR HYPA"/>
    <property type="match status" value="1"/>
</dbReference>
<dbReference type="Pfam" id="PF01155">
    <property type="entry name" value="HypA"/>
    <property type="match status" value="1"/>
</dbReference>
<dbReference type="PIRSF" id="PIRSF004761">
    <property type="entry name" value="Hydrgn_mat_HypA"/>
    <property type="match status" value="1"/>
</dbReference>
<dbReference type="PROSITE" id="PS01249">
    <property type="entry name" value="HYPA"/>
    <property type="match status" value="1"/>
</dbReference>
<accession>Q74G73</accession>
<reference key="1">
    <citation type="journal article" date="2003" name="Science">
        <title>Genome of Geobacter sulfurreducens: metal reduction in subsurface environments.</title>
        <authorList>
            <person name="Methe B.A."/>
            <person name="Nelson K.E."/>
            <person name="Eisen J.A."/>
            <person name="Paulsen I.T."/>
            <person name="Nelson W.C."/>
            <person name="Heidelberg J.F."/>
            <person name="Wu D."/>
            <person name="Wu M."/>
            <person name="Ward N.L."/>
            <person name="Beanan M.J."/>
            <person name="Dodson R.J."/>
            <person name="Madupu R."/>
            <person name="Brinkac L.M."/>
            <person name="Daugherty S.C."/>
            <person name="DeBoy R.T."/>
            <person name="Durkin A.S."/>
            <person name="Gwinn M.L."/>
            <person name="Kolonay J.F."/>
            <person name="Sullivan S.A."/>
            <person name="Haft D.H."/>
            <person name="Selengut J."/>
            <person name="Davidsen T.M."/>
            <person name="Zafar N."/>
            <person name="White O."/>
            <person name="Tran B."/>
            <person name="Romero C."/>
            <person name="Forberger H.A."/>
            <person name="Weidman J.F."/>
            <person name="Khouri H.M."/>
            <person name="Feldblyum T.V."/>
            <person name="Utterback T.R."/>
            <person name="Van Aken S.E."/>
            <person name="Lovley D.R."/>
            <person name="Fraser C.M."/>
        </authorList>
    </citation>
    <scope>NUCLEOTIDE SEQUENCE [LARGE SCALE GENOMIC DNA]</scope>
    <source>
        <strain>ATCC 51573 / DSM 12127 / PCA</strain>
    </source>
</reference>
<protein>
    <recommendedName>
        <fullName evidence="1">Hydrogenase maturation factor HypA</fullName>
    </recommendedName>
</protein>